<sequence>MKFAIVANTERKEAVLLAKELTGWLDSKRVSYVLESLSAEKLGIGPSAKIDDLNRICDIFISLGGDGTLLLASHYSETKPVLGINVGHLGFLTEFNKDEMIGAVEKVLDGSYSIHNRTQLEATTMCNGREQRMCALNDVVIEKGTYPRIPTFVIRLDGELLGSYRADGIIIATSTGSTAYSMSAGGPIIAPKSSVFVITPICPHMLTVRPIVISDDKVIEVSVDAQAGEFPLNCDGRITRMLQPQETVTVKKSNDLINLVANEERDYCEILRTKLLWGREHASSQPE</sequence>
<gene>
    <name evidence="1" type="primary">nadK</name>
    <name type="ordered locus">Clim_2409</name>
</gene>
<keyword id="KW-0067">ATP-binding</keyword>
<keyword id="KW-0963">Cytoplasm</keyword>
<keyword id="KW-0418">Kinase</keyword>
<keyword id="KW-0520">NAD</keyword>
<keyword id="KW-0521">NADP</keyword>
<keyword id="KW-0547">Nucleotide-binding</keyword>
<keyword id="KW-0808">Transferase</keyword>
<accession>B3EI21</accession>
<name>NADK_CHLL2</name>
<comment type="function">
    <text evidence="1">Involved in the regulation of the intracellular balance of NAD and NADP, and is a key enzyme in the biosynthesis of NADP. Catalyzes specifically the phosphorylation on 2'-hydroxyl of the adenosine moiety of NAD to yield NADP.</text>
</comment>
<comment type="catalytic activity">
    <reaction evidence="1">
        <text>NAD(+) + ATP = ADP + NADP(+) + H(+)</text>
        <dbReference type="Rhea" id="RHEA:18629"/>
        <dbReference type="ChEBI" id="CHEBI:15378"/>
        <dbReference type="ChEBI" id="CHEBI:30616"/>
        <dbReference type="ChEBI" id="CHEBI:57540"/>
        <dbReference type="ChEBI" id="CHEBI:58349"/>
        <dbReference type="ChEBI" id="CHEBI:456216"/>
        <dbReference type="EC" id="2.7.1.23"/>
    </reaction>
</comment>
<comment type="cofactor">
    <cofactor evidence="1">
        <name>a divalent metal cation</name>
        <dbReference type="ChEBI" id="CHEBI:60240"/>
    </cofactor>
</comment>
<comment type="subcellular location">
    <subcellularLocation>
        <location evidence="1">Cytoplasm</location>
    </subcellularLocation>
</comment>
<comment type="similarity">
    <text evidence="1">Belongs to the NAD kinase family.</text>
</comment>
<proteinExistence type="inferred from homology"/>
<protein>
    <recommendedName>
        <fullName evidence="1">NAD kinase</fullName>
        <ecNumber evidence="1">2.7.1.23</ecNumber>
    </recommendedName>
    <alternativeName>
        <fullName evidence="1">ATP-dependent NAD kinase</fullName>
    </alternativeName>
</protein>
<reference key="1">
    <citation type="submission" date="2008-05" db="EMBL/GenBank/DDBJ databases">
        <title>Complete sequence of Chlorobium limicola DSM 245.</title>
        <authorList>
            <consortium name="US DOE Joint Genome Institute"/>
            <person name="Lucas S."/>
            <person name="Copeland A."/>
            <person name="Lapidus A."/>
            <person name="Glavina del Rio T."/>
            <person name="Dalin E."/>
            <person name="Tice H."/>
            <person name="Bruce D."/>
            <person name="Goodwin L."/>
            <person name="Pitluck S."/>
            <person name="Schmutz J."/>
            <person name="Larimer F."/>
            <person name="Land M."/>
            <person name="Hauser L."/>
            <person name="Kyrpides N."/>
            <person name="Ovchinnikova G."/>
            <person name="Zhao F."/>
            <person name="Li T."/>
            <person name="Liu Z."/>
            <person name="Overmann J."/>
            <person name="Bryant D.A."/>
            <person name="Richardson P."/>
        </authorList>
    </citation>
    <scope>NUCLEOTIDE SEQUENCE [LARGE SCALE GENOMIC DNA]</scope>
    <source>
        <strain>DSM 245 / NBRC 103803 / 6330</strain>
    </source>
</reference>
<feature type="chain" id="PRO_1000120839" description="NAD kinase">
    <location>
        <begin position="1"/>
        <end position="287"/>
    </location>
</feature>
<feature type="active site" description="Proton acceptor" evidence="1">
    <location>
        <position position="66"/>
    </location>
</feature>
<feature type="binding site" evidence="1">
    <location>
        <begin position="66"/>
        <end position="67"/>
    </location>
    <ligand>
        <name>NAD(+)</name>
        <dbReference type="ChEBI" id="CHEBI:57540"/>
    </ligand>
</feature>
<feature type="binding site" evidence="1">
    <location>
        <begin position="137"/>
        <end position="138"/>
    </location>
    <ligand>
        <name>NAD(+)</name>
        <dbReference type="ChEBI" id="CHEBI:57540"/>
    </ligand>
</feature>
<feature type="binding site" evidence="1">
    <location>
        <position position="148"/>
    </location>
    <ligand>
        <name>NAD(+)</name>
        <dbReference type="ChEBI" id="CHEBI:57540"/>
    </ligand>
</feature>
<feature type="binding site" evidence="1">
    <location>
        <position position="165"/>
    </location>
    <ligand>
        <name>NAD(+)</name>
        <dbReference type="ChEBI" id="CHEBI:57540"/>
    </ligand>
</feature>
<feature type="binding site" evidence="1">
    <location>
        <position position="167"/>
    </location>
    <ligand>
        <name>NAD(+)</name>
        <dbReference type="ChEBI" id="CHEBI:57540"/>
    </ligand>
</feature>
<feature type="binding site" evidence="1">
    <location>
        <begin position="178"/>
        <end position="183"/>
    </location>
    <ligand>
        <name>NAD(+)</name>
        <dbReference type="ChEBI" id="CHEBI:57540"/>
    </ligand>
</feature>
<organism>
    <name type="scientific">Chlorobium limicola (strain DSM 245 / NBRC 103803 / 6330)</name>
    <dbReference type="NCBI Taxonomy" id="290315"/>
    <lineage>
        <taxon>Bacteria</taxon>
        <taxon>Pseudomonadati</taxon>
        <taxon>Chlorobiota</taxon>
        <taxon>Chlorobiia</taxon>
        <taxon>Chlorobiales</taxon>
        <taxon>Chlorobiaceae</taxon>
        <taxon>Chlorobium/Pelodictyon group</taxon>
        <taxon>Chlorobium</taxon>
    </lineage>
</organism>
<evidence type="ECO:0000255" key="1">
    <source>
        <dbReference type="HAMAP-Rule" id="MF_00361"/>
    </source>
</evidence>
<dbReference type="EC" id="2.7.1.23" evidence="1"/>
<dbReference type="EMBL" id="CP001097">
    <property type="protein sequence ID" value="ACD91430.1"/>
    <property type="molecule type" value="Genomic_DNA"/>
</dbReference>
<dbReference type="RefSeq" id="WP_012467295.1">
    <property type="nucleotide sequence ID" value="NC_010803.1"/>
</dbReference>
<dbReference type="SMR" id="B3EI21"/>
<dbReference type="STRING" id="290315.Clim_2409"/>
<dbReference type="KEGG" id="cli:Clim_2409"/>
<dbReference type="eggNOG" id="COG0061">
    <property type="taxonomic scope" value="Bacteria"/>
</dbReference>
<dbReference type="HOGENOM" id="CLU_008831_0_3_10"/>
<dbReference type="OrthoDB" id="9774737at2"/>
<dbReference type="Proteomes" id="UP000008841">
    <property type="component" value="Chromosome"/>
</dbReference>
<dbReference type="GO" id="GO:0005737">
    <property type="term" value="C:cytoplasm"/>
    <property type="evidence" value="ECO:0007669"/>
    <property type="project" value="UniProtKB-SubCell"/>
</dbReference>
<dbReference type="GO" id="GO:0005524">
    <property type="term" value="F:ATP binding"/>
    <property type="evidence" value="ECO:0007669"/>
    <property type="project" value="UniProtKB-KW"/>
</dbReference>
<dbReference type="GO" id="GO:0046872">
    <property type="term" value="F:metal ion binding"/>
    <property type="evidence" value="ECO:0007669"/>
    <property type="project" value="UniProtKB-UniRule"/>
</dbReference>
<dbReference type="GO" id="GO:0051287">
    <property type="term" value="F:NAD binding"/>
    <property type="evidence" value="ECO:0007669"/>
    <property type="project" value="UniProtKB-ARBA"/>
</dbReference>
<dbReference type="GO" id="GO:0003951">
    <property type="term" value="F:NAD+ kinase activity"/>
    <property type="evidence" value="ECO:0007669"/>
    <property type="project" value="UniProtKB-UniRule"/>
</dbReference>
<dbReference type="GO" id="GO:0019674">
    <property type="term" value="P:NAD metabolic process"/>
    <property type="evidence" value="ECO:0007669"/>
    <property type="project" value="InterPro"/>
</dbReference>
<dbReference type="GO" id="GO:0006741">
    <property type="term" value="P:NADP biosynthetic process"/>
    <property type="evidence" value="ECO:0007669"/>
    <property type="project" value="UniProtKB-UniRule"/>
</dbReference>
<dbReference type="Gene3D" id="3.40.50.10330">
    <property type="entry name" value="Probable inorganic polyphosphate/atp-NAD kinase, domain 1"/>
    <property type="match status" value="1"/>
</dbReference>
<dbReference type="Gene3D" id="2.60.200.30">
    <property type="entry name" value="Probable inorganic polyphosphate/atp-NAD kinase, domain 2"/>
    <property type="match status" value="1"/>
</dbReference>
<dbReference type="HAMAP" id="MF_00361">
    <property type="entry name" value="NAD_kinase"/>
    <property type="match status" value="1"/>
</dbReference>
<dbReference type="InterPro" id="IPR017438">
    <property type="entry name" value="ATP-NAD_kinase_N"/>
</dbReference>
<dbReference type="InterPro" id="IPR017437">
    <property type="entry name" value="ATP-NAD_kinase_PpnK-typ_C"/>
</dbReference>
<dbReference type="InterPro" id="IPR016064">
    <property type="entry name" value="NAD/diacylglycerol_kinase_sf"/>
</dbReference>
<dbReference type="InterPro" id="IPR002504">
    <property type="entry name" value="NADK"/>
</dbReference>
<dbReference type="PANTHER" id="PTHR20275">
    <property type="entry name" value="NAD KINASE"/>
    <property type="match status" value="1"/>
</dbReference>
<dbReference type="PANTHER" id="PTHR20275:SF0">
    <property type="entry name" value="NAD KINASE"/>
    <property type="match status" value="1"/>
</dbReference>
<dbReference type="Pfam" id="PF01513">
    <property type="entry name" value="NAD_kinase"/>
    <property type="match status" value="1"/>
</dbReference>
<dbReference type="Pfam" id="PF20143">
    <property type="entry name" value="NAD_kinase_C"/>
    <property type="match status" value="1"/>
</dbReference>
<dbReference type="SUPFAM" id="SSF111331">
    <property type="entry name" value="NAD kinase/diacylglycerol kinase-like"/>
    <property type="match status" value="1"/>
</dbReference>